<dbReference type="EC" id="3.6.5.n1" evidence="1"/>
<dbReference type="EMBL" id="CP000733">
    <property type="protein sequence ID" value="ABS76553.2"/>
    <property type="status" value="ALT_INIT"/>
    <property type="molecule type" value="Genomic_DNA"/>
</dbReference>
<dbReference type="SMR" id="A9KF98"/>
<dbReference type="KEGG" id="cbd:CBUD_0479"/>
<dbReference type="HOGENOM" id="CLU_009995_3_3_6"/>
<dbReference type="Proteomes" id="UP000008555">
    <property type="component" value="Chromosome"/>
</dbReference>
<dbReference type="GO" id="GO:0005886">
    <property type="term" value="C:plasma membrane"/>
    <property type="evidence" value="ECO:0007669"/>
    <property type="project" value="UniProtKB-SubCell"/>
</dbReference>
<dbReference type="GO" id="GO:0005525">
    <property type="term" value="F:GTP binding"/>
    <property type="evidence" value="ECO:0007669"/>
    <property type="project" value="UniProtKB-UniRule"/>
</dbReference>
<dbReference type="GO" id="GO:0003924">
    <property type="term" value="F:GTPase activity"/>
    <property type="evidence" value="ECO:0007669"/>
    <property type="project" value="UniProtKB-UniRule"/>
</dbReference>
<dbReference type="GO" id="GO:0097216">
    <property type="term" value="F:guanosine tetraphosphate binding"/>
    <property type="evidence" value="ECO:0007669"/>
    <property type="project" value="UniProtKB-ARBA"/>
</dbReference>
<dbReference type="GO" id="GO:0043022">
    <property type="term" value="F:ribosome binding"/>
    <property type="evidence" value="ECO:0007669"/>
    <property type="project" value="UniProtKB-UniRule"/>
</dbReference>
<dbReference type="GO" id="GO:0003746">
    <property type="term" value="F:translation elongation factor activity"/>
    <property type="evidence" value="ECO:0007669"/>
    <property type="project" value="UniProtKB-UniRule"/>
</dbReference>
<dbReference type="GO" id="GO:0045727">
    <property type="term" value="P:positive regulation of translation"/>
    <property type="evidence" value="ECO:0007669"/>
    <property type="project" value="UniProtKB-UniRule"/>
</dbReference>
<dbReference type="CDD" id="cd03699">
    <property type="entry name" value="EF4_II"/>
    <property type="match status" value="1"/>
</dbReference>
<dbReference type="CDD" id="cd16260">
    <property type="entry name" value="EF4_III"/>
    <property type="match status" value="1"/>
</dbReference>
<dbReference type="CDD" id="cd01890">
    <property type="entry name" value="LepA"/>
    <property type="match status" value="1"/>
</dbReference>
<dbReference type="CDD" id="cd03709">
    <property type="entry name" value="lepA_C"/>
    <property type="match status" value="1"/>
</dbReference>
<dbReference type="FunFam" id="3.40.50.300:FF:000078">
    <property type="entry name" value="Elongation factor 4"/>
    <property type="match status" value="1"/>
</dbReference>
<dbReference type="FunFam" id="2.40.30.10:FF:000015">
    <property type="entry name" value="Translation factor GUF1, mitochondrial"/>
    <property type="match status" value="1"/>
</dbReference>
<dbReference type="FunFam" id="3.30.70.240:FF:000007">
    <property type="entry name" value="Translation factor GUF1, mitochondrial"/>
    <property type="match status" value="1"/>
</dbReference>
<dbReference type="FunFam" id="3.30.70.2570:FF:000001">
    <property type="entry name" value="Translation factor GUF1, mitochondrial"/>
    <property type="match status" value="1"/>
</dbReference>
<dbReference type="FunFam" id="3.30.70.870:FF:000004">
    <property type="entry name" value="Translation factor GUF1, mitochondrial"/>
    <property type="match status" value="1"/>
</dbReference>
<dbReference type="Gene3D" id="3.30.70.240">
    <property type="match status" value="1"/>
</dbReference>
<dbReference type="Gene3D" id="3.30.70.2570">
    <property type="entry name" value="Elongation factor 4, C-terminal domain"/>
    <property type="match status" value="1"/>
</dbReference>
<dbReference type="Gene3D" id="3.30.70.870">
    <property type="entry name" value="Elongation Factor G (Translational Gtpase), domain 3"/>
    <property type="match status" value="1"/>
</dbReference>
<dbReference type="Gene3D" id="3.40.50.300">
    <property type="entry name" value="P-loop containing nucleotide triphosphate hydrolases"/>
    <property type="match status" value="1"/>
</dbReference>
<dbReference type="Gene3D" id="2.40.30.10">
    <property type="entry name" value="Translation factors"/>
    <property type="match status" value="1"/>
</dbReference>
<dbReference type="HAMAP" id="MF_00071">
    <property type="entry name" value="LepA"/>
    <property type="match status" value="1"/>
</dbReference>
<dbReference type="InterPro" id="IPR006297">
    <property type="entry name" value="EF-4"/>
</dbReference>
<dbReference type="InterPro" id="IPR035647">
    <property type="entry name" value="EFG_III/V"/>
</dbReference>
<dbReference type="InterPro" id="IPR000640">
    <property type="entry name" value="EFG_V-like"/>
</dbReference>
<dbReference type="InterPro" id="IPR004161">
    <property type="entry name" value="EFTu-like_2"/>
</dbReference>
<dbReference type="InterPro" id="IPR031157">
    <property type="entry name" value="G_TR_CS"/>
</dbReference>
<dbReference type="InterPro" id="IPR038363">
    <property type="entry name" value="LepA_C_sf"/>
</dbReference>
<dbReference type="InterPro" id="IPR013842">
    <property type="entry name" value="LepA_CTD"/>
</dbReference>
<dbReference type="InterPro" id="IPR035654">
    <property type="entry name" value="LepA_IV"/>
</dbReference>
<dbReference type="InterPro" id="IPR027417">
    <property type="entry name" value="P-loop_NTPase"/>
</dbReference>
<dbReference type="InterPro" id="IPR005225">
    <property type="entry name" value="Small_GTP-bd"/>
</dbReference>
<dbReference type="InterPro" id="IPR000795">
    <property type="entry name" value="T_Tr_GTP-bd_dom"/>
</dbReference>
<dbReference type="NCBIfam" id="TIGR01393">
    <property type="entry name" value="lepA"/>
    <property type="match status" value="1"/>
</dbReference>
<dbReference type="NCBIfam" id="TIGR00231">
    <property type="entry name" value="small_GTP"/>
    <property type="match status" value="1"/>
</dbReference>
<dbReference type="PANTHER" id="PTHR43512:SF4">
    <property type="entry name" value="TRANSLATION FACTOR GUF1 HOMOLOG, CHLOROPLASTIC"/>
    <property type="match status" value="1"/>
</dbReference>
<dbReference type="PANTHER" id="PTHR43512">
    <property type="entry name" value="TRANSLATION FACTOR GUF1-RELATED"/>
    <property type="match status" value="1"/>
</dbReference>
<dbReference type="Pfam" id="PF00679">
    <property type="entry name" value="EFG_C"/>
    <property type="match status" value="1"/>
</dbReference>
<dbReference type="Pfam" id="PF00009">
    <property type="entry name" value="GTP_EFTU"/>
    <property type="match status" value="1"/>
</dbReference>
<dbReference type="Pfam" id="PF03144">
    <property type="entry name" value="GTP_EFTU_D2"/>
    <property type="match status" value="1"/>
</dbReference>
<dbReference type="Pfam" id="PF06421">
    <property type="entry name" value="LepA_C"/>
    <property type="match status" value="1"/>
</dbReference>
<dbReference type="PRINTS" id="PR00315">
    <property type="entry name" value="ELONGATNFCT"/>
</dbReference>
<dbReference type="SUPFAM" id="SSF54980">
    <property type="entry name" value="EF-G C-terminal domain-like"/>
    <property type="match status" value="2"/>
</dbReference>
<dbReference type="SUPFAM" id="SSF52540">
    <property type="entry name" value="P-loop containing nucleoside triphosphate hydrolases"/>
    <property type="match status" value="1"/>
</dbReference>
<dbReference type="PROSITE" id="PS00301">
    <property type="entry name" value="G_TR_1"/>
    <property type="match status" value="1"/>
</dbReference>
<dbReference type="PROSITE" id="PS51722">
    <property type="entry name" value="G_TR_2"/>
    <property type="match status" value="1"/>
</dbReference>
<evidence type="ECO:0000255" key="1">
    <source>
        <dbReference type="HAMAP-Rule" id="MF_00071"/>
    </source>
</evidence>
<evidence type="ECO:0000305" key="2"/>
<organism>
    <name type="scientific">Coxiella burnetii (strain Dugway 5J108-111)</name>
    <dbReference type="NCBI Taxonomy" id="434922"/>
    <lineage>
        <taxon>Bacteria</taxon>
        <taxon>Pseudomonadati</taxon>
        <taxon>Pseudomonadota</taxon>
        <taxon>Gammaproteobacteria</taxon>
        <taxon>Legionellales</taxon>
        <taxon>Coxiellaceae</taxon>
        <taxon>Coxiella</taxon>
    </lineage>
</organism>
<protein>
    <recommendedName>
        <fullName evidence="1">Elongation factor 4</fullName>
        <shortName evidence="1">EF-4</shortName>
        <ecNumber evidence="1">3.6.5.n1</ecNumber>
    </recommendedName>
    <alternativeName>
        <fullName evidence="1">Ribosomal back-translocase LepA</fullName>
    </alternativeName>
</protein>
<comment type="function">
    <text evidence="1">Required for accurate and efficient protein synthesis under certain stress conditions. May act as a fidelity factor of the translation reaction, by catalyzing a one-codon backward translocation of tRNAs on improperly translocated ribosomes. Back-translocation proceeds from a post-translocation (POST) complex to a pre-translocation (PRE) complex, thus giving elongation factor G a second chance to translocate the tRNAs correctly. Binds to ribosomes in a GTP-dependent manner.</text>
</comment>
<comment type="catalytic activity">
    <reaction evidence="1">
        <text>GTP + H2O = GDP + phosphate + H(+)</text>
        <dbReference type="Rhea" id="RHEA:19669"/>
        <dbReference type="ChEBI" id="CHEBI:15377"/>
        <dbReference type="ChEBI" id="CHEBI:15378"/>
        <dbReference type="ChEBI" id="CHEBI:37565"/>
        <dbReference type="ChEBI" id="CHEBI:43474"/>
        <dbReference type="ChEBI" id="CHEBI:58189"/>
        <dbReference type="EC" id="3.6.5.n1"/>
    </reaction>
</comment>
<comment type="subcellular location">
    <subcellularLocation>
        <location evidence="1">Cell inner membrane</location>
        <topology evidence="1">Peripheral membrane protein</topology>
        <orientation evidence="1">Cytoplasmic side</orientation>
    </subcellularLocation>
</comment>
<comment type="similarity">
    <text evidence="1">Belongs to the TRAFAC class translation factor GTPase superfamily. Classic translation factor GTPase family. LepA subfamily.</text>
</comment>
<comment type="sequence caution" evidence="2">
    <conflict type="erroneous initiation">
        <sequence resource="EMBL-CDS" id="ABS76553"/>
    </conflict>
</comment>
<sequence>MTTISQKFIRNFSIIAHIDHGKSTLADRFIQLCGGLSEREMKAQVLDSMDIERERGITIKAQSVTLNFKSQDGHFYQLNFIDTPGHVDFSYEVSRSLAACEGALLVVDAAQGVEAQTVATCYTAIEQGLVVLPVLNKIDLPQADPERVIQEIEDVIGIEAHDAIRVSAKEGRCVKELLEQLVVAIPPPVGDPEAPLQALIIDSWFDSYLGVVSLVRVKAGTLRKGDKIRVMSTGKDYYADQIGHFTPKRQPLEELSAGAVGFVVAGIKDIFGAPVGDTLTHAKQSAGSPLPGFKQVKPQVFAGLFPINSEEYEPFREALAKLQLNDAALFYEPESSEALGFGFRCGFLGMLHMEIVQERLEREYNLELITTAPTVSYEILTKQGEMLYVDNPSHLPEPGKIGEIREPIAVANILVPPTYLGAVITLCVEKRGVQKKLLYLSNQVSMTYEIPLSEVVLDFFDRLKSASRGYASLDYSFNHFQAADLVKLDILISGQKVDALATIVHRDLAYTRGRELTERLKDLIPRQMFEVAIQAAIGAKIIARTSVKALRKNVTAKCYGGDITRKRKLLEKQKAGKKRMKQVGKVAIPQEAFLAVLRVKNE</sequence>
<keyword id="KW-0997">Cell inner membrane</keyword>
<keyword id="KW-1003">Cell membrane</keyword>
<keyword id="KW-0342">GTP-binding</keyword>
<keyword id="KW-0378">Hydrolase</keyword>
<keyword id="KW-0472">Membrane</keyword>
<keyword id="KW-0547">Nucleotide-binding</keyword>
<keyword id="KW-0648">Protein biosynthesis</keyword>
<proteinExistence type="inferred from homology"/>
<name>LEPA_COXBN</name>
<gene>
    <name evidence="1" type="primary">lepA</name>
    <name type="ordered locus">CBUD_0479</name>
</gene>
<accession>A9KF98</accession>
<feature type="chain" id="PRO_1000075128" description="Elongation factor 4">
    <location>
        <begin position="1"/>
        <end position="602"/>
    </location>
</feature>
<feature type="domain" description="tr-type G">
    <location>
        <begin position="7"/>
        <end position="189"/>
    </location>
</feature>
<feature type="binding site" evidence="1">
    <location>
        <begin position="19"/>
        <end position="24"/>
    </location>
    <ligand>
        <name>GTP</name>
        <dbReference type="ChEBI" id="CHEBI:37565"/>
    </ligand>
</feature>
<feature type="binding site" evidence="1">
    <location>
        <begin position="136"/>
        <end position="139"/>
    </location>
    <ligand>
        <name>GTP</name>
        <dbReference type="ChEBI" id="CHEBI:37565"/>
    </ligand>
</feature>
<reference key="1">
    <citation type="journal article" date="2009" name="Infect. Immun.">
        <title>Comparative genomics reveal extensive transposon-mediated genomic plasticity and diversity among potential effector proteins within the genus Coxiella.</title>
        <authorList>
            <person name="Beare P.A."/>
            <person name="Unsworth N."/>
            <person name="Andoh M."/>
            <person name="Voth D.E."/>
            <person name="Omsland A."/>
            <person name="Gilk S.D."/>
            <person name="Williams K.P."/>
            <person name="Sobral B.W."/>
            <person name="Kupko J.J. III"/>
            <person name="Porcella S.F."/>
            <person name="Samuel J.E."/>
            <person name="Heinzen R.A."/>
        </authorList>
    </citation>
    <scope>NUCLEOTIDE SEQUENCE [LARGE SCALE GENOMIC DNA]</scope>
    <source>
        <strain>Dugway 5J108-111</strain>
    </source>
</reference>